<reference key="1">
    <citation type="journal article" date="2007" name="Mol. Phylogenet. Evol.">
        <title>Phylogenetic and evolutionary implications of complete chloroplast genome sequences of four early-diverging angiosperms: Buxus (Buxaceae), Chloranthus (Chloranthaceae), Dioscorea (Dioscoreaceae), and Illicium (Schisandraceae).</title>
        <authorList>
            <person name="Hansen D.R."/>
            <person name="Dastidar S.G."/>
            <person name="Cai Z."/>
            <person name="Penaflor C."/>
            <person name="Kuehl J.V."/>
            <person name="Boore J.L."/>
            <person name="Jansen R.K."/>
        </authorList>
    </citation>
    <scope>NUCLEOTIDE SEQUENCE [LARGE SCALE GENOMIC DNA]</scope>
</reference>
<dbReference type="EMBL" id="EF380351">
    <property type="protein sequence ID" value="ABQ45236.1"/>
    <property type="molecule type" value="Genomic_DNA"/>
</dbReference>
<dbReference type="RefSeq" id="YP_001294171.1">
    <property type="nucleotide sequence ID" value="NC_009599.1"/>
</dbReference>
<dbReference type="SMR" id="A6MM23"/>
<dbReference type="GeneID" id="5236956"/>
<dbReference type="GO" id="GO:0009535">
    <property type="term" value="C:chloroplast thylakoid membrane"/>
    <property type="evidence" value="ECO:0007669"/>
    <property type="project" value="UniProtKB-SubCell"/>
</dbReference>
<dbReference type="GO" id="GO:0045259">
    <property type="term" value="C:proton-transporting ATP synthase complex"/>
    <property type="evidence" value="ECO:0007669"/>
    <property type="project" value="UniProtKB-KW"/>
</dbReference>
<dbReference type="GO" id="GO:0033177">
    <property type="term" value="C:proton-transporting two-sector ATPase complex, proton-transporting domain"/>
    <property type="evidence" value="ECO:0007669"/>
    <property type="project" value="InterPro"/>
</dbReference>
<dbReference type="GO" id="GO:0008289">
    <property type="term" value="F:lipid binding"/>
    <property type="evidence" value="ECO:0007669"/>
    <property type="project" value="UniProtKB-KW"/>
</dbReference>
<dbReference type="GO" id="GO:0046933">
    <property type="term" value="F:proton-transporting ATP synthase activity, rotational mechanism"/>
    <property type="evidence" value="ECO:0007669"/>
    <property type="project" value="UniProtKB-UniRule"/>
</dbReference>
<dbReference type="CDD" id="cd18183">
    <property type="entry name" value="ATP-synt_Fo_c_ATPH"/>
    <property type="match status" value="1"/>
</dbReference>
<dbReference type="FunFam" id="1.20.20.10:FF:000001">
    <property type="entry name" value="ATP synthase subunit c, chloroplastic"/>
    <property type="match status" value="1"/>
</dbReference>
<dbReference type="Gene3D" id="1.20.20.10">
    <property type="entry name" value="F1F0 ATP synthase subunit C"/>
    <property type="match status" value="1"/>
</dbReference>
<dbReference type="HAMAP" id="MF_01396">
    <property type="entry name" value="ATP_synth_c_bact"/>
    <property type="match status" value="1"/>
</dbReference>
<dbReference type="InterPro" id="IPR005953">
    <property type="entry name" value="ATP_synth_csu_bac/chlpt"/>
</dbReference>
<dbReference type="InterPro" id="IPR000454">
    <property type="entry name" value="ATP_synth_F0_csu"/>
</dbReference>
<dbReference type="InterPro" id="IPR020537">
    <property type="entry name" value="ATP_synth_F0_csu_DDCD_BS"/>
</dbReference>
<dbReference type="InterPro" id="IPR038662">
    <property type="entry name" value="ATP_synth_F0_csu_sf"/>
</dbReference>
<dbReference type="InterPro" id="IPR002379">
    <property type="entry name" value="ATPase_proteolipid_c-like_dom"/>
</dbReference>
<dbReference type="InterPro" id="IPR035921">
    <property type="entry name" value="F/V-ATP_Csub_sf"/>
</dbReference>
<dbReference type="NCBIfam" id="TIGR01260">
    <property type="entry name" value="ATP_synt_c"/>
    <property type="match status" value="1"/>
</dbReference>
<dbReference type="NCBIfam" id="NF005608">
    <property type="entry name" value="PRK07354.1"/>
    <property type="match status" value="1"/>
</dbReference>
<dbReference type="PANTHER" id="PTHR10031">
    <property type="entry name" value="ATP SYNTHASE LIPID-BINDING PROTEIN, MITOCHONDRIAL"/>
    <property type="match status" value="1"/>
</dbReference>
<dbReference type="PANTHER" id="PTHR10031:SF0">
    <property type="entry name" value="ATPASE PROTEIN 9"/>
    <property type="match status" value="1"/>
</dbReference>
<dbReference type="Pfam" id="PF00137">
    <property type="entry name" value="ATP-synt_C"/>
    <property type="match status" value="1"/>
</dbReference>
<dbReference type="PRINTS" id="PR00124">
    <property type="entry name" value="ATPASEC"/>
</dbReference>
<dbReference type="SUPFAM" id="SSF81333">
    <property type="entry name" value="F1F0 ATP synthase subunit C"/>
    <property type="match status" value="1"/>
</dbReference>
<dbReference type="PROSITE" id="PS00605">
    <property type="entry name" value="ATPASE_C"/>
    <property type="match status" value="1"/>
</dbReference>
<organism>
    <name type="scientific">Buxus microphylla</name>
    <name type="common">Littleleaf boxwood</name>
    <name type="synonym">Japanese boxwood</name>
    <dbReference type="NCBI Taxonomy" id="153571"/>
    <lineage>
        <taxon>Eukaryota</taxon>
        <taxon>Viridiplantae</taxon>
        <taxon>Streptophyta</taxon>
        <taxon>Embryophyta</taxon>
        <taxon>Tracheophyta</taxon>
        <taxon>Spermatophyta</taxon>
        <taxon>Magnoliopsida</taxon>
        <taxon>Buxales</taxon>
        <taxon>Buxaceae</taxon>
        <taxon>Buxus</taxon>
    </lineage>
</organism>
<feature type="chain" id="PRO_0000362891" description="ATP synthase subunit c, chloroplastic">
    <location>
        <begin position="1"/>
        <end position="81"/>
    </location>
</feature>
<feature type="transmembrane region" description="Helical" evidence="1">
    <location>
        <begin position="3"/>
        <end position="23"/>
    </location>
</feature>
<feature type="transmembrane region" description="Helical" evidence="1">
    <location>
        <begin position="57"/>
        <end position="77"/>
    </location>
</feature>
<feature type="site" description="Reversibly protonated during proton transport" evidence="1">
    <location>
        <position position="61"/>
    </location>
</feature>
<name>ATPH_BUXMI</name>
<keyword id="KW-0066">ATP synthesis</keyword>
<keyword id="KW-0138">CF(0)</keyword>
<keyword id="KW-0150">Chloroplast</keyword>
<keyword id="KW-0375">Hydrogen ion transport</keyword>
<keyword id="KW-0406">Ion transport</keyword>
<keyword id="KW-0446">Lipid-binding</keyword>
<keyword id="KW-0472">Membrane</keyword>
<keyword id="KW-0934">Plastid</keyword>
<keyword id="KW-0793">Thylakoid</keyword>
<keyword id="KW-0812">Transmembrane</keyword>
<keyword id="KW-1133">Transmembrane helix</keyword>
<keyword id="KW-0813">Transport</keyword>
<evidence type="ECO:0000255" key="1">
    <source>
        <dbReference type="HAMAP-Rule" id="MF_01396"/>
    </source>
</evidence>
<sequence>MNPLISAASVIAAGLAVGLASIGPGVGQGTAAGQAVEGIARQPEAEGKIRGTLLLSLAFMEALTIYGLVVALALLFANPFV</sequence>
<proteinExistence type="inferred from homology"/>
<protein>
    <recommendedName>
        <fullName evidence="1">ATP synthase subunit c, chloroplastic</fullName>
    </recommendedName>
    <alternativeName>
        <fullName evidence="1">ATP synthase F(0) sector subunit c</fullName>
    </alternativeName>
    <alternativeName>
        <fullName evidence="1">ATPase subunit III</fullName>
    </alternativeName>
    <alternativeName>
        <fullName evidence="1">F-type ATPase subunit c</fullName>
        <shortName evidence="1">F-ATPase subunit c</shortName>
    </alternativeName>
    <alternativeName>
        <fullName evidence="1">Lipid-binding protein</fullName>
    </alternativeName>
</protein>
<accession>A6MM23</accession>
<gene>
    <name evidence="1" type="primary">atpH</name>
</gene>
<geneLocation type="chloroplast"/>
<comment type="function">
    <text evidence="1">F(1)F(0) ATP synthase produces ATP from ADP in the presence of a proton or sodium gradient. F-type ATPases consist of two structural domains, F(1) containing the extramembraneous catalytic core and F(0) containing the membrane proton channel, linked together by a central stalk and a peripheral stalk. During catalysis, ATP synthesis in the catalytic domain of F(1) is coupled via a rotary mechanism of the central stalk subunits to proton translocation.</text>
</comment>
<comment type="function">
    <text evidence="1">Key component of the F(0) channel; it plays a direct role in translocation across the membrane. A homomeric c-ring of between 10-14 subunits forms the central stalk rotor element with the F(1) delta and epsilon subunits.</text>
</comment>
<comment type="subunit">
    <text evidence="1">F-type ATPases have 2 components, F(1) - the catalytic core - and F(0) - the membrane proton channel. F(1) has five subunits: alpha(3), beta(3), gamma(1), delta(1), epsilon(1). F(0) has four main subunits: a(1), b(1), b'(1) and c(10-14). The alpha and beta chains form an alternating ring which encloses part of the gamma chain. F(1) is attached to F(0) by a central stalk formed by the gamma and epsilon chains, while a peripheral stalk is formed by the delta, b and b' chains.</text>
</comment>
<comment type="subcellular location">
    <subcellularLocation>
        <location evidence="1">Plastid</location>
        <location evidence="1">Chloroplast thylakoid membrane</location>
        <topology evidence="1">Multi-pass membrane protein</topology>
    </subcellularLocation>
</comment>
<comment type="miscellaneous">
    <text>In plastids the F-type ATPase is also known as CF(1)CF(0).</text>
</comment>
<comment type="similarity">
    <text evidence="1">Belongs to the ATPase C chain family.</text>
</comment>